<comment type="function">
    <text evidence="1">Associates with the EF-Tu.GDP complex and induces the exchange of GDP to GTP. It remains bound to the aminoacyl-tRNA.EF-Tu.GTP complex up to the GTP hydrolysis stage on the ribosome (By similarity).</text>
</comment>
<comment type="subcellular location">
    <subcellularLocation>
        <location evidence="1">Cytoplasm</location>
    </subcellularLocation>
</comment>
<comment type="similarity">
    <text evidence="2">Belongs to the EF-Ts family.</text>
</comment>
<protein>
    <recommendedName>
        <fullName>Elongation factor Ts</fullName>
        <shortName>EF-Ts</shortName>
    </recommendedName>
</protein>
<accession>P9WNM0</accession>
<accession>L0TB62</accession>
<accession>Q10788</accession>
<gene>
    <name type="primary">tsf</name>
    <name type="ordered locus">MT2957</name>
</gene>
<feature type="chain" id="PRO_0000427103" description="Elongation factor Ts">
    <location>
        <begin position="1"/>
        <end position="271"/>
    </location>
</feature>
<feature type="region of interest" description="Involved in Mg(2+) ion dislocation from EF-Tu" evidence="1">
    <location>
        <begin position="76"/>
        <end position="79"/>
    </location>
</feature>
<evidence type="ECO:0000250" key="1"/>
<evidence type="ECO:0000305" key="2"/>
<sequence length="271" mass="28755">MANFTAADVKRLRELTGAGMLACKNALAETDGDFDKAVEALRIKGAKDVGKRAERATAEGLVAAKDGALIELNCETDFVAKNAEFQTLADQVVAAAAAAKPADVDALKGASIGDKTVEQAIAELSAKIGEKLELRRVAIFDGTVEAYLHRRSADLPPAVGVLVEYRGDDAAAAHAVALQIAALRARYLSRDDVPEDIVASERRIAEETARAEGKPEQALPKIVEGRLNGFFKDAVLLEQASVSDNKKTVKALLDVAGVTVTRFVRFEVGQA</sequence>
<keyword id="KW-0963">Cytoplasm</keyword>
<keyword id="KW-0251">Elongation factor</keyword>
<keyword id="KW-0648">Protein biosynthesis</keyword>
<keyword id="KW-1185">Reference proteome</keyword>
<name>EFTS_MYCTO</name>
<reference key="1">
    <citation type="journal article" date="2002" name="J. Bacteriol.">
        <title>Whole-genome comparison of Mycobacterium tuberculosis clinical and laboratory strains.</title>
        <authorList>
            <person name="Fleischmann R.D."/>
            <person name="Alland D."/>
            <person name="Eisen J.A."/>
            <person name="Carpenter L."/>
            <person name="White O."/>
            <person name="Peterson J.D."/>
            <person name="DeBoy R.T."/>
            <person name="Dodson R.J."/>
            <person name="Gwinn M.L."/>
            <person name="Haft D.H."/>
            <person name="Hickey E.K."/>
            <person name="Kolonay J.F."/>
            <person name="Nelson W.C."/>
            <person name="Umayam L.A."/>
            <person name="Ermolaeva M.D."/>
            <person name="Salzberg S.L."/>
            <person name="Delcher A."/>
            <person name="Utterback T.R."/>
            <person name="Weidman J.F."/>
            <person name="Khouri H.M."/>
            <person name="Gill J."/>
            <person name="Mikula A."/>
            <person name="Bishai W."/>
            <person name="Jacobs W.R. Jr."/>
            <person name="Venter J.C."/>
            <person name="Fraser C.M."/>
        </authorList>
    </citation>
    <scope>NUCLEOTIDE SEQUENCE [LARGE SCALE GENOMIC DNA]</scope>
    <source>
        <strain>CDC 1551 / Oshkosh</strain>
    </source>
</reference>
<dbReference type="EMBL" id="AE000516">
    <property type="protein sequence ID" value="AAK47282.1"/>
    <property type="molecule type" value="Genomic_DNA"/>
</dbReference>
<dbReference type="PIR" id="D70925">
    <property type="entry name" value="D70925"/>
</dbReference>
<dbReference type="RefSeq" id="WP_003899527.1">
    <property type="nucleotide sequence ID" value="NZ_KK341227.1"/>
</dbReference>
<dbReference type="SMR" id="P9WNM0"/>
<dbReference type="GeneID" id="45426877"/>
<dbReference type="KEGG" id="mtc:MT2957"/>
<dbReference type="PATRIC" id="fig|83331.31.peg.3194"/>
<dbReference type="HOGENOM" id="CLU_047155_0_0_11"/>
<dbReference type="Proteomes" id="UP000001020">
    <property type="component" value="Chromosome"/>
</dbReference>
<dbReference type="GO" id="GO:0005737">
    <property type="term" value="C:cytoplasm"/>
    <property type="evidence" value="ECO:0007669"/>
    <property type="project" value="UniProtKB-SubCell"/>
</dbReference>
<dbReference type="GO" id="GO:0003746">
    <property type="term" value="F:translation elongation factor activity"/>
    <property type="evidence" value="ECO:0007669"/>
    <property type="project" value="UniProtKB-UniRule"/>
</dbReference>
<dbReference type="CDD" id="cd14275">
    <property type="entry name" value="UBA_EF-Ts"/>
    <property type="match status" value="1"/>
</dbReference>
<dbReference type="FunFam" id="1.10.286.20:FF:000001">
    <property type="entry name" value="Elongation factor Ts"/>
    <property type="match status" value="1"/>
</dbReference>
<dbReference type="FunFam" id="1.10.8.10:FF:000001">
    <property type="entry name" value="Elongation factor Ts"/>
    <property type="match status" value="1"/>
</dbReference>
<dbReference type="FunFam" id="3.30.479.20:FF:000021">
    <property type="entry name" value="Elongation factor Ts"/>
    <property type="match status" value="1"/>
</dbReference>
<dbReference type="Gene3D" id="1.10.286.20">
    <property type="match status" value="1"/>
</dbReference>
<dbReference type="Gene3D" id="1.10.8.10">
    <property type="entry name" value="DNA helicase RuvA subunit, C-terminal domain"/>
    <property type="match status" value="1"/>
</dbReference>
<dbReference type="Gene3D" id="3.30.479.20">
    <property type="entry name" value="Elongation factor Ts, dimerisation domain"/>
    <property type="match status" value="2"/>
</dbReference>
<dbReference type="HAMAP" id="MF_00050">
    <property type="entry name" value="EF_Ts"/>
    <property type="match status" value="1"/>
</dbReference>
<dbReference type="InterPro" id="IPR036402">
    <property type="entry name" value="EF-Ts_dimer_sf"/>
</dbReference>
<dbReference type="InterPro" id="IPR001816">
    <property type="entry name" value="Transl_elong_EFTs/EF1B"/>
</dbReference>
<dbReference type="InterPro" id="IPR014039">
    <property type="entry name" value="Transl_elong_EFTs/EF1B_dimer"/>
</dbReference>
<dbReference type="InterPro" id="IPR018101">
    <property type="entry name" value="Transl_elong_Ts_CS"/>
</dbReference>
<dbReference type="InterPro" id="IPR009060">
    <property type="entry name" value="UBA-like_sf"/>
</dbReference>
<dbReference type="NCBIfam" id="TIGR00116">
    <property type="entry name" value="tsf"/>
    <property type="match status" value="1"/>
</dbReference>
<dbReference type="PANTHER" id="PTHR11741">
    <property type="entry name" value="ELONGATION FACTOR TS"/>
    <property type="match status" value="1"/>
</dbReference>
<dbReference type="PANTHER" id="PTHR11741:SF0">
    <property type="entry name" value="ELONGATION FACTOR TS, MITOCHONDRIAL"/>
    <property type="match status" value="1"/>
</dbReference>
<dbReference type="Pfam" id="PF00889">
    <property type="entry name" value="EF_TS"/>
    <property type="match status" value="1"/>
</dbReference>
<dbReference type="SUPFAM" id="SSF54713">
    <property type="entry name" value="Elongation factor Ts (EF-Ts), dimerisation domain"/>
    <property type="match status" value="2"/>
</dbReference>
<dbReference type="SUPFAM" id="SSF46934">
    <property type="entry name" value="UBA-like"/>
    <property type="match status" value="1"/>
</dbReference>
<dbReference type="PROSITE" id="PS01126">
    <property type="entry name" value="EF_TS_1"/>
    <property type="match status" value="1"/>
</dbReference>
<dbReference type="PROSITE" id="PS01127">
    <property type="entry name" value="EF_TS_2"/>
    <property type="match status" value="1"/>
</dbReference>
<proteinExistence type="inferred from homology"/>
<organism>
    <name type="scientific">Mycobacterium tuberculosis (strain CDC 1551 / Oshkosh)</name>
    <dbReference type="NCBI Taxonomy" id="83331"/>
    <lineage>
        <taxon>Bacteria</taxon>
        <taxon>Bacillati</taxon>
        <taxon>Actinomycetota</taxon>
        <taxon>Actinomycetes</taxon>
        <taxon>Mycobacteriales</taxon>
        <taxon>Mycobacteriaceae</taxon>
        <taxon>Mycobacterium</taxon>
        <taxon>Mycobacterium tuberculosis complex</taxon>
    </lineage>
</organism>